<dbReference type="EC" id="1.14.14.91" evidence="1"/>
<dbReference type="EMBL" id="U71081">
    <property type="protein sequence ID" value="AAB58356.1"/>
    <property type="molecule type" value="mRNA"/>
</dbReference>
<dbReference type="EMBL" id="U71080">
    <property type="protein sequence ID" value="AAB58355.1"/>
    <property type="molecule type" value="Genomic_DNA"/>
</dbReference>
<dbReference type="EMBL" id="D78596">
    <property type="protein sequence ID" value="BAA24355.1"/>
    <property type="molecule type" value="mRNA"/>
</dbReference>
<dbReference type="EMBL" id="U93215">
    <property type="protein sequence ID" value="AAB63088.1"/>
    <property type="molecule type" value="Genomic_DNA"/>
</dbReference>
<dbReference type="EMBL" id="CP002685">
    <property type="protein sequence ID" value="AEC08397.1"/>
    <property type="molecule type" value="Genomic_DNA"/>
</dbReference>
<dbReference type="EMBL" id="AY065145">
    <property type="protein sequence ID" value="AAL38321.1"/>
    <property type="molecule type" value="mRNA"/>
</dbReference>
<dbReference type="EMBL" id="BT008875">
    <property type="protein sequence ID" value="AAP68314.1"/>
    <property type="molecule type" value="mRNA"/>
</dbReference>
<dbReference type="PIR" id="A84709">
    <property type="entry name" value="A84709"/>
</dbReference>
<dbReference type="SMR" id="P92994"/>
<dbReference type="BioGRID" id="2948">
    <property type="interactions" value="12"/>
</dbReference>
<dbReference type="FunCoup" id="P92994">
    <property type="interactions" value="334"/>
</dbReference>
<dbReference type="IntAct" id="P92994">
    <property type="interactions" value="9"/>
</dbReference>
<dbReference type="STRING" id="3702.P92994"/>
<dbReference type="PaxDb" id="3702-AT2G30490.1"/>
<dbReference type="ProteomicsDB" id="246431"/>
<dbReference type="EnsemblPlants" id="AT2G30490.1">
    <property type="protein sequence ID" value="AT2G30490.1"/>
    <property type="gene ID" value="AT2G30490"/>
</dbReference>
<dbReference type="GeneID" id="817599"/>
<dbReference type="Gramene" id="AT2G30490.1">
    <property type="protein sequence ID" value="AT2G30490.1"/>
    <property type="gene ID" value="AT2G30490"/>
</dbReference>
<dbReference type="KEGG" id="ath:AT2G30490"/>
<dbReference type="Araport" id="AT2G30490"/>
<dbReference type="TAIR" id="AT2G30490">
    <property type="gene designation" value="C4H"/>
</dbReference>
<dbReference type="eggNOG" id="KOG0156">
    <property type="taxonomic scope" value="Eukaryota"/>
</dbReference>
<dbReference type="HOGENOM" id="CLU_001570_4_0_1"/>
<dbReference type="InParanoid" id="P92994"/>
<dbReference type="OMA" id="DPRAYWQ"/>
<dbReference type="PhylomeDB" id="P92994"/>
<dbReference type="BioCyc" id="ARA:AT2G30490-MONOMER"/>
<dbReference type="BioCyc" id="MetaCyc:AT2G30490-MONOMER"/>
<dbReference type="SABIO-RK" id="P92994"/>
<dbReference type="UniPathway" id="UPA00825">
    <property type="reaction ID" value="UER00789"/>
</dbReference>
<dbReference type="CD-CODE" id="4299E36E">
    <property type="entry name" value="Nucleolus"/>
</dbReference>
<dbReference type="PRO" id="PR:P92994"/>
<dbReference type="Proteomes" id="UP000006548">
    <property type="component" value="Chromosome 2"/>
</dbReference>
<dbReference type="ExpressionAtlas" id="P92994">
    <property type="expression patterns" value="baseline and differential"/>
</dbReference>
<dbReference type="GO" id="GO:0005783">
    <property type="term" value="C:endoplasmic reticulum"/>
    <property type="evidence" value="ECO:0000314"/>
    <property type="project" value="TAIR"/>
</dbReference>
<dbReference type="GO" id="GO:0005794">
    <property type="term" value="C:Golgi apparatus"/>
    <property type="evidence" value="ECO:0007005"/>
    <property type="project" value="TAIR"/>
</dbReference>
<dbReference type="GO" id="GO:0005777">
    <property type="term" value="C:peroxisome"/>
    <property type="evidence" value="ECO:0007005"/>
    <property type="project" value="TAIR"/>
</dbReference>
<dbReference type="GO" id="GO:0009505">
    <property type="term" value="C:plant-type cell wall"/>
    <property type="evidence" value="ECO:0007005"/>
    <property type="project" value="TAIR"/>
</dbReference>
<dbReference type="GO" id="GO:0000325">
    <property type="term" value="C:plant-type vacuole"/>
    <property type="evidence" value="ECO:0007005"/>
    <property type="project" value="TAIR"/>
</dbReference>
<dbReference type="GO" id="GO:0005886">
    <property type="term" value="C:plasma membrane"/>
    <property type="evidence" value="ECO:0007005"/>
    <property type="project" value="TAIR"/>
</dbReference>
<dbReference type="GO" id="GO:0009506">
    <property type="term" value="C:plasmodesma"/>
    <property type="evidence" value="ECO:0007005"/>
    <property type="project" value="TAIR"/>
</dbReference>
<dbReference type="GO" id="GO:0020037">
    <property type="term" value="F:heme binding"/>
    <property type="evidence" value="ECO:0007669"/>
    <property type="project" value="InterPro"/>
</dbReference>
<dbReference type="GO" id="GO:0042802">
    <property type="term" value="F:identical protein binding"/>
    <property type="evidence" value="ECO:0000353"/>
    <property type="project" value="TAIR"/>
</dbReference>
<dbReference type="GO" id="GO:0005506">
    <property type="term" value="F:iron ion binding"/>
    <property type="evidence" value="ECO:0007669"/>
    <property type="project" value="InterPro"/>
</dbReference>
<dbReference type="GO" id="GO:0016710">
    <property type="term" value="F:trans-cinnamate 4-monooxygenase activity"/>
    <property type="evidence" value="ECO:0000314"/>
    <property type="project" value="TAIR"/>
</dbReference>
<dbReference type="GO" id="GO:0032502">
    <property type="term" value="P:developmental process"/>
    <property type="evidence" value="ECO:0000315"/>
    <property type="project" value="TAIR"/>
</dbReference>
<dbReference type="GO" id="GO:0009808">
    <property type="term" value="P:lignin metabolic process"/>
    <property type="evidence" value="ECO:0000315"/>
    <property type="project" value="TAIR"/>
</dbReference>
<dbReference type="GO" id="GO:0009698">
    <property type="term" value="P:phenylpropanoid metabolic process"/>
    <property type="evidence" value="ECO:0000315"/>
    <property type="project" value="TAIR"/>
</dbReference>
<dbReference type="GO" id="GO:0009555">
    <property type="term" value="P:pollen development"/>
    <property type="evidence" value="ECO:0000315"/>
    <property type="project" value="TAIR"/>
</dbReference>
<dbReference type="GO" id="GO:0006744">
    <property type="term" value="P:ubiquinone biosynthetic process"/>
    <property type="evidence" value="ECO:0000315"/>
    <property type="project" value="TAIR"/>
</dbReference>
<dbReference type="CDD" id="cd11074">
    <property type="entry name" value="CYP73"/>
    <property type="match status" value="1"/>
</dbReference>
<dbReference type="FunFam" id="1.10.630.10:FF:000013">
    <property type="entry name" value="Trans-cinnamate 4-monooxygenase"/>
    <property type="match status" value="1"/>
</dbReference>
<dbReference type="Gene3D" id="1.10.630.10">
    <property type="entry name" value="Cytochrome P450"/>
    <property type="match status" value="1"/>
</dbReference>
<dbReference type="InterPro" id="IPR001128">
    <property type="entry name" value="Cyt_P450"/>
</dbReference>
<dbReference type="InterPro" id="IPR017972">
    <property type="entry name" value="Cyt_P450_CS"/>
</dbReference>
<dbReference type="InterPro" id="IPR002401">
    <property type="entry name" value="Cyt_P450_E_grp-I"/>
</dbReference>
<dbReference type="InterPro" id="IPR036396">
    <property type="entry name" value="Cyt_P450_sf"/>
</dbReference>
<dbReference type="PANTHER" id="PTHR47948">
    <property type="entry name" value="TRANS-CINNAMATE 4-MONOOXYGENASE"/>
    <property type="match status" value="1"/>
</dbReference>
<dbReference type="PANTHER" id="PTHR47948:SF4">
    <property type="entry name" value="TRANS-CINNAMATE 4-MONOOXYGENASE"/>
    <property type="match status" value="1"/>
</dbReference>
<dbReference type="Pfam" id="PF00067">
    <property type="entry name" value="p450"/>
    <property type="match status" value="1"/>
</dbReference>
<dbReference type="PRINTS" id="PR00463">
    <property type="entry name" value="EP450I"/>
</dbReference>
<dbReference type="PRINTS" id="PR00385">
    <property type="entry name" value="P450"/>
</dbReference>
<dbReference type="SUPFAM" id="SSF48264">
    <property type="entry name" value="Cytochrome P450"/>
    <property type="match status" value="1"/>
</dbReference>
<dbReference type="PROSITE" id="PS00086">
    <property type="entry name" value="CYTOCHROME_P450"/>
    <property type="match status" value="1"/>
</dbReference>
<evidence type="ECO:0000250" key="1">
    <source>
        <dbReference type="UniProtKB" id="Q04468"/>
    </source>
</evidence>
<evidence type="ECO:0000250" key="2">
    <source>
        <dbReference type="UniProtKB" id="Q94IP1"/>
    </source>
</evidence>
<evidence type="ECO:0000255" key="3"/>
<evidence type="ECO:0000269" key="4">
    <source>
    </source>
</evidence>
<evidence type="ECO:0000269" key="5">
    <source>
    </source>
</evidence>
<evidence type="ECO:0000269" key="6">
    <source>
    </source>
</evidence>
<evidence type="ECO:0000303" key="7">
    <source>
    </source>
</evidence>
<evidence type="ECO:0000303" key="8">
    <source>
    </source>
</evidence>
<evidence type="ECO:0000305" key="9"/>
<evidence type="ECO:0000312" key="10">
    <source>
        <dbReference type="Araport" id="AT2G30490"/>
    </source>
</evidence>
<evidence type="ECO:0000312" key="11">
    <source>
        <dbReference type="EMBL" id="AAB63088.1"/>
    </source>
</evidence>
<sequence length="505" mass="57792">MDLLLLEKSLIAVFVAVILATVISKLRGKKLKLPPGPIPIPIFGNWLQVGDDLNHRNLVDYAKKFGDLFLLRMGQRNLVVVSSPDLTKEVLLTQGVEFGSRTRNVVFDIFTGKGQDMVFTVYGEHWRKMRRIMTVPFFTNKVVQQNREGWEFEAASVVEDVKKNPDSATKGIVLRKRLQLMMYNNMFRIMFDRRFESEDDPLFLRLKALNGERSRLAQSFEYNYGDFIPILRPFLRGYLKICQDVKDRRIALFKKYFVDERKQIASSKPTGSEGLKCAIDHILEAEQKGEINEDNVLYIVENINVAAIETTLWSIEWGIAELVNHPEIQSKLRNELDTVLGPGVQVTEPDLHKLPYLQAVVKETLRLRMAIPLLVPHMNLHDAKLAGYDIPAESKILVNAWWLANNPNSWKKPEEFRPERFFEEESHVEANGNDFRYVPFGVGRRSCPGIILALPILGITIGRMVQNFELLPPPGQSKVDTSEKGGQFSLHILNHSIIVMKPRNC</sequence>
<feature type="chain" id="PRO_0000052242" description="Trans-cinnamate 4-monooxygenase">
    <location>
        <begin position="1"/>
        <end position="505"/>
    </location>
</feature>
<feature type="transmembrane region" description="Helical" evidence="3">
    <location>
        <begin position="3"/>
        <end position="23"/>
    </location>
</feature>
<feature type="binding site" evidence="2">
    <location>
        <begin position="213"/>
        <end position="218"/>
    </location>
    <ligand>
        <name>(E)-cinnamate</name>
        <dbReference type="ChEBI" id="CHEBI:15669"/>
    </ligand>
</feature>
<feature type="binding site" evidence="2">
    <location>
        <position position="306"/>
    </location>
    <ligand>
        <name>(E)-cinnamate</name>
        <dbReference type="ChEBI" id="CHEBI:15669"/>
    </ligand>
</feature>
<feature type="binding site" description="axial binding residue" evidence="2">
    <location>
        <position position="447"/>
    </location>
    <ligand>
        <name>heme</name>
        <dbReference type="ChEBI" id="CHEBI:30413"/>
    </ligand>
    <ligandPart>
        <name>Fe</name>
        <dbReference type="ChEBI" id="CHEBI:18248"/>
    </ligandPart>
</feature>
<feature type="sequence variant" description="In strain: cv. Landsberg erecta.">
    <original>L</original>
    <variation>H</variation>
    <location>
        <position position="92"/>
    </location>
</feature>
<feature type="mutagenesis site" description="In ref3-3; reduces lignin deposition and alters lignin monomer content; dwarf phenotype, male sterility and development of swellings at branch junctions." evidence="4">
    <original>G</original>
    <variation>E</variation>
    <location>
        <position position="99"/>
    </location>
</feature>
<feature type="mutagenesis site" description="In ref3-2; reduces lignin deposition and alters lignin monomer content; dwarf phenotype, male sterility and development of swellings at branch junctions." evidence="4">
    <original>R</original>
    <variation>K</variation>
    <location>
        <position position="249"/>
    </location>
</feature>
<feature type="mutagenesis site" description="In ref3-1; reduces lignin deposition and alters lignin monomer content; dwarf phenotype, male sterility and development of swellings at branch junctions." evidence="4">
    <original>A</original>
    <variation>T</variation>
    <location>
        <position position="306"/>
    </location>
</feature>
<feature type="sequence conflict" description="In Ref. 2; BAA24355." evidence="9" ref="2">
    <original>N</original>
    <variation>T</variation>
    <location>
        <position position="184"/>
    </location>
</feature>
<feature type="sequence conflict" description="In Ref. 2; BAA24355." evidence="9" ref="2">
    <original>R</original>
    <variation>G</variation>
    <location>
        <position position="333"/>
    </location>
</feature>
<proteinExistence type="evidence at protein level"/>
<accession>P92994</accession>
<accession>O04995</accession>
<accession>O49834</accession>
<accession>P92993</accession>
<protein>
    <recommendedName>
        <fullName>Trans-cinnamate 4-monooxygenase</fullName>
        <ecNumber evidence="1">1.14.14.91</ecNumber>
    </recommendedName>
    <alternativeName>
        <fullName>Cinnamic acid 4-hydroxylase</fullName>
        <shortName>C4H</shortName>
        <shortName>CA4H</shortName>
    </alternativeName>
    <alternativeName>
        <fullName>Cytochrome P450 73</fullName>
    </alternativeName>
    <alternativeName>
        <fullName>Cytochrome P450C4H</fullName>
    </alternativeName>
    <alternativeName>
        <fullName evidence="7">Protein REDUCED EPIDERMAL FLUORESCENCE 3</fullName>
    </alternativeName>
</protein>
<keyword id="KW-0349">Heme</keyword>
<keyword id="KW-0408">Iron</keyword>
<keyword id="KW-0472">Membrane</keyword>
<keyword id="KW-0479">Metal-binding</keyword>
<keyword id="KW-0503">Monooxygenase</keyword>
<keyword id="KW-0560">Oxidoreductase</keyword>
<keyword id="KW-1185">Reference proteome</keyword>
<keyword id="KW-0812">Transmembrane</keyword>
<keyword id="KW-1133">Transmembrane helix</keyword>
<gene>
    <name evidence="8" type="primary">CYP73A5</name>
    <name evidence="8" type="synonym">CYP73</name>
    <name evidence="7" type="synonym">REF3</name>
    <name evidence="10" type="ordered locus">At2g30490</name>
    <name evidence="11" type="ORF">T6B20.16</name>
</gene>
<organism>
    <name type="scientific">Arabidopsis thaliana</name>
    <name type="common">Mouse-ear cress</name>
    <dbReference type="NCBI Taxonomy" id="3702"/>
    <lineage>
        <taxon>Eukaryota</taxon>
        <taxon>Viridiplantae</taxon>
        <taxon>Streptophyta</taxon>
        <taxon>Embryophyta</taxon>
        <taxon>Tracheophyta</taxon>
        <taxon>Spermatophyta</taxon>
        <taxon>Magnoliopsida</taxon>
        <taxon>eudicotyledons</taxon>
        <taxon>Gunneridae</taxon>
        <taxon>Pentapetalae</taxon>
        <taxon>rosids</taxon>
        <taxon>malvids</taxon>
        <taxon>Brassicales</taxon>
        <taxon>Brassicaceae</taxon>
        <taxon>Camelineae</taxon>
        <taxon>Arabidopsis</taxon>
    </lineage>
</organism>
<reference key="1">
    <citation type="journal article" date="1997" name="Plant Physiol.">
        <title>Cinnamate-4-hydroxylase expression in Arabidopsis. Regulation in response to development and the environment.</title>
        <authorList>
            <person name="Bell-Lelong D.A."/>
            <person name="Cusumano J.C."/>
            <person name="Meyer K."/>
            <person name="Chapple C."/>
        </authorList>
    </citation>
    <scope>NUCLEOTIDE SEQUENCE [GENOMIC DNA / MRNA]</scope>
    <scope>TISSUE SPECIFICITY</scope>
    <scope>INDUCTION BY WOUNDING</scope>
    <source>
        <strain>cv. Columbia</strain>
        <strain>cv. Landsberg erecta</strain>
    </source>
</reference>
<reference key="2">
    <citation type="journal article" date="1997" name="Plant Physiol.">
        <title>Isolation of a cDNA and a genomic clone encoding cinnamate 4-hydroxylase from Arabidopsis and its expression manner in planta.</title>
        <authorList>
            <person name="Mizutani M."/>
            <person name="Ohta D."/>
            <person name="Sato R."/>
        </authorList>
    </citation>
    <scope>NUCLEOTIDE SEQUENCE [MRNA]</scope>
    <scope>TISSUE SPECIFICITY</scope>
    <scope>INDUCTION BY WOUNDING</scope>
    <source>
        <strain>cv. Columbia</strain>
        <tissue>Seedling</tissue>
    </source>
</reference>
<reference key="3">
    <citation type="journal article" date="1999" name="Nature">
        <title>Sequence and analysis of chromosome 2 of the plant Arabidopsis thaliana.</title>
        <authorList>
            <person name="Lin X."/>
            <person name="Kaul S."/>
            <person name="Rounsley S.D."/>
            <person name="Shea T.P."/>
            <person name="Benito M.-I."/>
            <person name="Town C.D."/>
            <person name="Fujii C.Y."/>
            <person name="Mason T.M."/>
            <person name="Bowman C.L."/>
            <person name="Barnstead M.E."/>
            <person name="Feldblyum T.V."/>
            <person name="Buell C.R."/>
            <person name="Ketchum K.A."/>
            <person name="Lee J.J."/>
            <person name="Ronning C.M."/>
            <person name="Koo H.L."/>
            <person name="Moffat K.S."/>
            <person name="Cronin L.A."/>
            <person name="Shen M."/>
            <person name="Pai G."/>
            <person name="Van Aken S."/>
            <person name="Umayam L."/>
            <person name="Tallon L.J."/>
            <person name="Gill J.E."/>
            <person name="Adams M.D."/>
            <person name="Carrera A.J."/>
            <person name="Creasy T.H."/>
            <person name="Goodman H.M."/>
            <person name="Somerville C.R."/>
            <person name="Copenhaver G.P."/>
            <person name="Preuss D."/>
            <person name="Nierman W.C."/>
            <person name="White O."/>
            <person name="Eisen J.A."/>
            <person name="Salzberg S.L."/>
            <person name="Fraser C.M."/>
            <person name="Venter J.C."/>
        </authorList>
    </citation>
    <scope>NUCLEOTIDE SEQUENCE [LARGE SCALE GENOMIC DNA]</scope>
    <source>
        <strain>cv. Columbia</strain>
    </source>
</reference>
<reference key="4">
    <citation type="journal article" date="2017" name="Plant J.">
        <title>Araport11: a complete reannotation of the Arabidopsis thaliana reference genome.</title>
        <authorList>
            <person name="Cheng C.Y."/>
            <person name="Krishnakumar V."/>
            <person name="Chan A.P."/>
            <person name="Thibaud-Nissen F."/>
            <person name="Schobel S."/>
            <person name="Town C.D."/>
        </authorList>
    </citation>
    <scope>GENOME REANNOTATION</scope>
    <source>
        <strain>cv. Columbia</strain>
    </source>
</reference>
<reference key="5">
    <citation type="journal article" date="2003" name="Science">
        <title>Empirical analysis of transcriptional activity in the Arabidopsis genome.</title>
        <authorList>
            <person name="Yamada K."/>
            <person name="Lim J."/>
            <person name="Dale J.M."/>
            <person name="Chen H."/>
            <person name="Shinn P."/>
            <person name="Palm C.J."/>
            <person name="Southwick A.M."/>
            <person name="Wu H.C."/>
            <person name="Kim C.J."/>
            <person name="Nguyen M."/>
            <person name="Pham P.K."/>
            <person name="Cheuk R.F."/>
            <person name="Karlin-Newmann G."/>
            <person name="Liu S.X."/>
            <person name="Lam B."/>
            <person name="Sakano H."/>
            <person name="Wu T."/>
            <person name="Yu G."/>
            <person name="Miranda M."/>
            <person name="Quach H.L."/>
            <person name="Tripp M."/>
            <person name="Chang C.H."/>
            <person name="Lee J.M."/>
            <person name="Toriumi M.J."/>
            <person name="Chan M.M."/>
            <person name="Tang C.C."/>
            <person name="Onodera C.S."/>
            <person name="Deng J.M."/>
            <person name="Akiyama K."/>
            <person name="Ansari Y."/>
            <person name="Arakawa T."/>
            <person name="Banh J."/>
            <person name="Banno F."/>
            <person name="Bowser L."/>
            <person name="Brooks S.Y."/>
            <person name="Carninci P."/>
            <person name="Chao Q."/>
            <person name="Choy N."/>
            <person name="Enju A."/>
            <person name="Goldsmith A.D."/>
            <person name="Gurjal M."/>
            <person name="Hansen N.F."/>
            <person name="Hayashizaki Y."/>
            <person name="Johnson-Hopson C."/>
            <person name="Hsuan V.W."/>
            <person name="Iida K."/>
            <person name="Karnes M."/>
            <person name="Khan S."/>
            <person name="Koesema E."/>
            <person name="Ishida J."/>
            <person name="Jiang P.X."/>
            <person name="Jones T."/>
            <person name="Kawai J."/>
            <person name="Kamiya A."/>
            <person name="Meyers C."/>
            <person name="Nakajima M."/>
            <person name="Narusaka M."/>
            <person name="Seki M."/>
            <person name="Sakurai T."/>
            <person name="Satou M."/>
            <person name="Tamse R."/>
            <person name="Vaysberg M."/>
            <person name="Wallender E.K."/>
            <person name="Wong C."/>
            <person name="Yamamura Y."/>
            <person name="Yuan S."/>
            <person name="Shinozaki K."/>
            <person name="Davis R.W."/>
            <person name="Theologis A."/>
            <person name="Ecker J.R."/>
        </authorList>
    </citation>
    <scope>NUCLEOTIDE SEQUENCE [LARGE SCALE MRNA]</scope>
    <source>
        <strain>cv. Columbia</strain>
    </source>
</reference>
<reference key="6">
    <citation type="journal article" date="2009" name="Plant J.">
        <title>Mutations in the cinnamate 4-hydroxylase gene impact metabolism, growth and development in Arabidopsis.</title>
        <authorList>
            <person name="Schilmiller A.L."/>
            <person name="Stout J."/>
            <person name="Weng J.K."/>
            <person name="Humphreys J."/>
            <person name="Ruegger M.O."/>
            <person name="Chapple C."/>
        </authorList>
    </citation>
    <scope>FUNCTION</scope>
    <scope>MUTAGENESIS OF GLY-99; ARG-249 AND ALA-306</scope>
</reference>
<reference key="7">
    <citation type="journal article" date="2013" name="Plant Physiol. Biochem.">
        <title>The flavonoid biosynthetic pathway in Arabidopsis: Structural and genetic diversity.</title>
        <authorList>
            <person name="Saito K."/>
            <person name="Yonekura-Sakakibara K."/>
            <person name="Nakabayashi R."/>
            <person name="Higashi Y."/>
            <person name="Yamazaki M."/>
            <person name="Tohge T."/>
            <person name="Fernie A.R."/>
        </authorList>
    </citation>
    <scope>REVIEW</scope>
    <scope>NOMENCLATURE</scope>
</reference>
<comment type="function">
    <text evidence="1 4">Catalyzes the first oxidative step of the phenylpropanoid pathway in higher plants by transforming trans-cinnamate into p-coumarate (By similarity). The compounds formed by this pathway are essential components for lignification, pollination, and defense against ultraviolet light, predators and pathogens (PubMed:19682296).</text>
</comment>
<comment type="catalytic activity">
    <reaction evidence="1">
        <text>(E)-cinnamate + reduced [NADPH--hemoprotein reductase] + O2 = (E)-4-coumarate + oxidized [NADPH--hemoprotein reductase] + H2O + H(+)</text>
        <dbReference type="Rhea" id="RHEA:10608"/>
        <dbReference type="Rhea" id="RHEA-COMP:11964"/>
        <dbReference type="Rhea" id="RHEA-COMP:11965"/>
        <dbReference type="ChEBI" id="CHEBI:12876"/>
        <dbReference type="ChEBI" id="CHEBI:15377"/>
        <dbReference type="ChEBI" id="CHEBI:15378"/>
        <dbReference type="ChEBI" id="CHEBI:15379"/>
        <dbReference type="ChEBI" id="CHEBI:15669"/>
        <dbReference type="ChEBI" id="CHEBI:57618"/>
        <dbReference type="ChEBI" id="CHEBI:58210"/>
        <dbReference type="EC" id="1.14.14.91"/>
    </reaction>
</comment>
<comment type="cofactor">
    <cofactor evidence="2">
        <name>heme</name>
        <dbReference type="ChEBI" id="CHEBI:30413"/>
    </cofactor>
</comment>
<comment type="pathway">
    <text evidence="9">Phenylpropanoid metabolism; trans-4-coumarate biosynthesis; trans-4-coumarate from trans-cinnamate: step 1/1.</text>
</comment>
<comment type="subcellular location">
    <subcellularLocation>
        <location evidence="3">Membrane</location>
        <topology evidence="3">Single-pass membrane protein</topology>
    </subcellularLocation>
</comment>
<comment type="tissue specificity">
    <text evidence="5 6">Expressed in roots, leaves, stems, flowers and siliques.</text>
</comment>
<comment type="induction">
    <text evidence="5 6">Induced by wounding.</text>
</comment>
<comment type="similarity">
    <text evidence="9">Belongs to the cytochrome P450 family.</text>
</comment>
<name>TCMO_ARATH</name>